<dbReference type="EC" id="3.1.21.1"/>
<dbReference type="EMBL" id="BA000003">
    <property type="protein sequence ID" value="BAB13110.1"/>
    <property type="molecule type" value="Genomic_DNA"/>
</dbReference>
<dbReference type="RefSeq" id="NP_240224.1">
    <property type="nucleotide sequence ID" value="NC_002528.1"/>
</dbReference>
<dbReference type="SMR" id="P57487"/>
<dbReference type="STRING" id="563178.BUAP5A_402"/>
<dbReference type="EnsemblBacteria" id="BAB13110">
    <property type="protein sequence ID" value="BAB13110"/>
    <property type="gene ID" value="BAB13110"/>
</dbReference>
<dbReference type="KEGG" id="buc:BU409"/>
<dbReference type="PATRIC" id="fig|107806.10.peg.421"/>
<dbReference type="eggNOG" id="COG2356">
    <property type="taxonomic scope" value="Bacteria"/>
</dbReference>
<dbReference type="HOGENOM" id="CLU_070541_0_0_6"/>
<dbReference type="Proteomes" id="UP000001806">
    <property type="component" value="Chromosome"/>
</dbReference>
<dbReference type="GO" id="GO:0004530">
    <property type="term" value="F:deoxyribonuclease I activity"/>
    <property type="evidence" value="ECO:0007669"/>
    <property type="project" value="UniProtKB-EC"/>
</dbReference>
<dbReference type="InterPro" id="IPR007346">
    <property type="entry name" value="Endonuclease-I"/>
</dbReference>
<dbReference type="InterPro" id="IPR044925">
    <property type="entry name" value="His-Me_finger_sf"/>
</dbReference>
<dbReference type="PANTHER" id="PTHR33607">
    <property type="entry name" value="ENDONUCLEASE-1"/>
    <property type="match status" value="1"/>
</dbReference>
<dbReference type="PANTHER" id="PTHR33607:SF2">
    <property type="entry name" value="ENDONUCLEASE-1"/>
    <property type="match status" value="1"/>
</dbReference>
<dbReference type="Pfam" id="PF04231">
    <property type="entry name" value="Endonuclease_1"/>
    <property type="match status" value="1"/>
</dbReference>
<dbReference type="SUPFAM" id="SSF54060">
    <property type="entry name" value="His-Me finger endonucleases"/>
    <property type="match status" value="1"/>
</dbReference>
<keyword id="KW-0255">Endonuclease</keyword>
<keyword id="KW-0378">Hydrolase</keyword>
<keyword id="KW-0540">Nuclease</keyword>
<keyword id="KW-1185">Reference proteome</keyword>
<organism>
    <name type="scientific">Buchnera aphidicola subsp. Acyrthosiphon pisum (strain APS)</name>
    <name type="common">Acyrthosiphon pisum symbiotic bacterium</name>
    <dbReference type="NCBI Taxonomy" id="107806"/>
    <lineage>
        <taxon>Bacteria</taxon>
        <taxon>Pseudomonadati</taxon>
        <taxon>Pseudomonadota</taxon>
        <taxon>Gammaproteobacteria</taxon>
        <taxon>Enterobacterales</taxon>
        <taxon>Erwiniaceae</taxon>
        <taxon>Buchnera</taxon>
    </lineage>
</organism>
<comment type="function">
    <text evidence="1">Has double-strand break activity.</text>
</comment>
<comment type="catalytic activity">
    <reaction>
        <text>Endonucleolytic cleavage to 5'-phosphodinucleotide and 5'-phosphooligonucleotide end-products.</text>
        <dbReference type="EC" id="3.1.21.1"/>
    </reaction>
</comment>
<comment type="similarity">
    <text evidence="2">Belongs to the EndA/NucM nuclease family.</text>
</comment>
<proteinExistence type="inferred from homology"/>
<sequence>MKKFCFLKIEKIKNDKKNVYCYNKYVFFFSSNKRSYFKKKTIENFYQAKIISIKIHKNAPGSFYCGCQIIWKQKKGIPNLYSCGYKIRKNKNRATRIEWEHVVPAWQFGHQKTCWKKGGRKKCMEDKKYKHIESDLHNLQPAIGEINGDRSNFMYGQLNNSVAQYGRCNMKIDFKRKIVEPPERARGAIARTYFYMNKKYNIILSEKERKMFTIWDKIFPVTKWECEREKLIFNIQGNHNDYVYKHCYKK</sequence>
<name>END1_BUCAI</name>
<evidence type="ECO:0000250" key="1"/>
<evidence type="ECO:0000305" key="2"/>
<feature type="chain" id="PRO_0000207691" description="Endonuclease-1">
    <location>
        <begin position="1"/>
        <end position="250"/>
    </location>
</feature>
<reference key="1">
    <citation type="journal article" date="2000" name="Nature">
        <title>Genome sequence of the endocellular bacterial symbiont of aphids Buchnera sp. APS.</title>
        <authorList>
            <person name="Shigenobu S."/>
            <person name="Watanabe H."/>
            <person name="Hattori M."/>
            <person name="Sakaki Y."/>
            <person name="Ishikawa H."/>
        </authorList>
    </citation>
    <scope>NUCLEOTIDE SEQUENCE [LARGE SCALE GENOMIC DNA]</scope>
    <source>
        <strain>APS</strain>
    </source>
</reference>
<protein>
    <recommendedName>
        <fullName>Endonuclease-1</fullName>
        <ecNumber>3.1.21.1</ecNumber>
    </recommendedName>
    <alternativeName>
        <fullName>Endonuclease I</fullName>
        <shortName>Endo I</shortName>
    </alternativeName>
</protein>
<accession>P57487</accession>
<gene>
    <name type="primary">endA</name>
    <name type="ordered locus">BU409</name>
</gene>